<organismHost>
    <name type="scientific">Homo sapiens</name>
    <name type="common">Human</name>
    <dbReference type="NCBI Taxonomy" id="9606"/>
</organismHost>
<feature type="chain" id="PRO_0000116304" description="Tegument protein UL23">
    <location>
        <begin position="1"/>
        <end position="284"/>
    </location>
</feature>
<accession>P16846</accession>
<accession>Q7M6R0</accession>
<name>UL23_HCMVA</name>
<gene>
    <name type="primary">UL23</name>
</gene>
<keyword id="KW-1035">Host cytoplasm</keyword>
<keyword id="KW-0945">Host-virus interaction</keyword>
<keyword id="KW-1090">Inhibition of host innate immune response by virus</keyword>
<keyword id="KW-1114">Inhibition of host interferon signaling pathway by virus</keyword>
<keyword id="KW-1105">Inhibition of host STAT1 by virus</keyword>
<keyword id="KW-0922">Interferon antiviral system evasion</keyword>
<keyword id="KW-1185">Reference proteome</keyword>
<keyword id="KW-0899">Viral immunoevasion</keyword>
<keyword id="KW-0946">Virion</keyword>
<keyword id="KW-0920">Virion tegument</keyword>
<proteinExistence type="evidence at protein level"/>
<comment type="function">
    <text evidence="2">Plays a role in the inhibition of host innate immune response by disrupting the interaction between NMI and STAT1. In turn, NMI-mediated transcription of interferon-gamma stimulated genes is inhibited.</text>
</comment>
<comment type="subunit">
    <text evidence="2">Interacts with host NMI; this interaction inhibits NMI interaction with STAT1.</text>
</comment>
<comment type="subcellular location">
    <subcellularLocation>
        <location evidence="1">Virion tegument</location>
    </subcellularLocation>
    <subcellularLocation>
        <location evidence="2">Host cytoplasm</location>
    </subcellularLocation>
</comment>
<comment type="similarity">
    <text evidence="3">Belongs to the herpesviridae US22 family.</text>
</comment>
<comment type="sequence caution" evidence="3">
    <conflict type="erroneous initiation">
        <sequence resource="EMBL-CDS" id="CAA35422"/>
    </conflict>
</comment>
<organism>
    <name type="scientific">Human cytomegalovirus (strain AD169)</name>
    <name type="common">HHV-5</name>
    <name type="synonym">Human herpesvirus 5</name>
    <dbReference type="NCBI Taxonomy" id="10360"/>
    <lineage>
        <taxon>Viruses</taxon>
        <taxon>Duplodnaviria</taxon>
        <taxon>Heunggongvirae</taxon>
        <taxon>Peploviricota</taxon>
        <taxon>Herviviricetes</taxon>
        <taxon>Herpesvirales</taxon>
        <taxon>Orthoherpesviridae</taxon>
        <taxon>Betaherpesvirinae</taxon>
        <taxon>Cytomegalovirus</taxon>
        <taxon>Cytomegalovirus humanbeta5</taxon>
        <taxon>Human cytomegalovirus</taxon>
    </lineage>
</organism>
<reference key="1">
    <citation type="journal article" date="1990" name="Curr. Top. Microbiol. Immunol.">
        <title>Analysis of the protein-coding content of the sequence of human cytomegalovirus strain AD169.</title>
        <authorList>
            <person name="Chee M.S."/>
            <person name="Bankier A.T."/>
            <person name="Beck S."/>
            <person name="Bohni R."/>
            <person name="Brown C.M."/>
            <person name="Cerny R."/>
            <person name="Horsnell T."/>
            <person name="Hutchison C.A. III"/>
            <person name="Kouzarides T."/>
            <person name="Martignetti J.A."/>
            <person name="Preddie E."/>
            <person name="Satchwell S.C."/>
            <person name="Tomlinson P."/>
            <person name="Weston K.M."/>
            <person name="Barrell B.G."/>
        </authorList>
    </citation>
    <scope>NUCLEOTIDE SEQUENCE [LARGE SCALE GENOMIC DNA]</scope>
</reference>
<reference key="2">
    <citation type="journal article" date="2003" name="J. Gen. Virol.">
        <title>The human cytomegalovirus genome revisited: comparison with the chimpanzee cytomegalovirus genome.</title>
        <authorList>
            <person name="Davison A.J."/>
            <person name="Dolan A."/>
            <person name="Akter P."/>
            <person name="Addison C."/>
            <person name="Dargan D.J."/>
            <person name="Alcendor D.J."/>
            <person name="McGeoch D.J."/>
            <person name="Hayward G.S."/>
        </authorList>
    </citation>
    <scope>GENOME REANNOTATION</scope>
</reference>
<reference key="3">
    <citation type="journal article" date="2003" name="J. Gen. Virol.">
        <authorList>
            <person name="Davison A.J."/>
            <person name="Dolan A."/>
            <person name="Akter P."/>
            <person name="Addison C."/>
            <person name="Dargan D.J."/>
            <person name="Alcendor D.J."/>
            <person name="McGeoch D.J."/>
            <person name="Hayward G.S."/>
        </authorList>
    </citation>
    <scope>ERRATUM OF PUBMED:12533697</scope>
</reference>
<reference key="4">
    <citation type="journal article" date="2002" name="J. Gen. Virol.">
        <title>The products of human cytomegalovirus genes UL23, UL24, UL43 and US22 are tegument components.</title>
        <authorList>
            <person name="Adair R."/>
            <person name="Douglas E.R."/>
            <person name="Maclean J.B."/>
            <person name="Graham S.Y."/>
            <person name="Aitken J.D."/>
            <person name="Jamieson F.E."/>
            <person name="Dargan D.J."/>
        </authorList>
    </citation>
    <scope>SUBCELLULAR LOCATION</scope>
</reference>
<reference key="5">
    <citation type="journal article" date="2018" name="PLoS Pathog.">
        <title>Human cytomegalovirus UL23 inhibits transcription of interferon-gamma stimulated genes and blocks antiviral interferon-gamma responses by interacting with human N-myc interactor protein.</title>
        <authorList>
            <person name="Feng L."/>
            <person name="Sheng J."/>
            <person name="Vu G.P."/>
            <person name="Liu Y."/>
            <person name="Foo C."/>
            <person name="Wu S."/>
            <person name="Trang P."/>
            <person name="Paliza-Carre M."/>
            <person name="Ran Y."/>
            <person name="Yang X."/>
            <person name="Sun X."/>
            <person name="Deng Z."/>
            <person name="Zhou T."/>
            <person name="Lu S."/>
            <person name="Li H."/>
            <person name="Liu F."/>
        </authorList>
    </citation>
    <scope>FUNCTION</scope>
    <scope>INTERACTION WITH HOST NMI</scope>
    <scope>SUBCELLULAR LOCATION</scope>
</reference>
<reference key="6">
    <citation type="journal article" date="2021" name="Front. Microbiol.">
        <title>Human Cytomegalovirus UL23 Attenuates Signal Transducer and Activator of Transcription 1 Phosphorylation and Type I Interferon Response.</title>
        <authorList>
            <person name="Feng L."/>
            <person name="Li W."/>
            <person name="Wu X."/>
            <person name="Li X."/>
            <person name="Yang X."/>
            <person name="Ran Y."/>
            <person name="Wu J."/>
            <person name="Li H."/>
        </authorList>
    </citation>
    <scope>FUNCTION</scope>
</reference>
<sequence length="284" mass="32957">MSVIKDCFLNLLDRWRPPKTSRPWKPGQRVALVWPKDRCLVIRRRWRLVRDEGRDAQRLASYLCCPEPLRFVGSICTYNFLKHKGDHNVPSELYLGASGAMYLWTDHIYSDSLTFVAESITEFLNIGLRRCNFITVPEELPHTASLRALAGCMHIHAFAQWRATYRGRLMVMGDYSVIRVSTIRLYDWSEINDWRVMVGSNHVEPLGWLVSPYDVINLFVDDCMRVFAANNQHVCIVADSLMEFVTRGMTRCHENGIYYGTRSMRKLNKPTCPYGVDHQLFDDA</sequence>
<protein>
    <recommendedName>
        <fullName>Tegument protein UL23</fullName>
    </recommendedName>
</protein>
<dbReference type="EMBL" id="X17403">
    <property type="protein sequence ID" value="CAA35422.1"/>
    <property type="status" value="ALT_INIT"/>
    <property type="molecule type" value="Genomic_DNA"/>
</dbReference>
<dbReference type="EMBL" id="BK000394">
    <property type="protein sequence ID" value="DAA00127.1"/>
    <property type="molecule type" value="Genomic_DNA"/>
</dbReference>
<dbReference type="PIR" id="S09786">
    <property type="entry name" value="S09786"/>
</dbReference>
<dbReference type="RefSeq" id="YP_081482.1">
    <property type="nucleotide sequence ID" value="NC_006273.2"/>
</dbReference>
<dbReference type="DNASU" id="3077524"/>
<dbReference type="GeneID" id="3077524"/>
<dbReference type="KEGG" id="vg:3077524"/>
<dbReference type="Proteomes" id="UP000008991">
    <property type="component" value="Segment"/>
</dbReference>
<dbReference type="Proteomes" id="UP000008992">
    <property type="component" value="Segment"/>
</dbReference>
<dbReference type="GO" id="GO:0030430">
    <property type="term" value="C:host cell cytoplasm"/>
    <property type="evidence" value="ECO:0007669"/>
    <property type="project" value="UniProtKB-SubCell"/>
</dbReference>
<dbReference type="GO" id="GO:0019033">
    <property type="term" value="C:viral tegument"/>
    <property type="evidence" value="ECO:0007669"/>
    <property type="project" value="UniProtKB-SubCell"/>
</dbReference>
<dbReference type="GO" id="GO:0052170">
    <property type="term" value="P:symbiont-mediated suppression of host innate immune response"/>
    <property type="evidence" value="ECO:0007669"/>
    <property type="project" value="UniProtKB-KW"/>
</dbReference>
<dbReference type="GO" id="GO:0039563">
    <property type="term" value="P:symbiont-mediated suppression of host JAK-STAT cascade via inhibition of STAT1 activity"/>
    <property type="evidence" value="ECO:0007669"/>
    <property type="project" value="UniProtKB-KW"/>
</dbReference>
<dbReference type="GO" id="GO:0039502">
    <property type="term" value="P:symbiont-mediated suppression of host type I interferon-mediated signaling pathway"/>
    <property type="evidence" value="ECO:0007669"/>
    <property type="project" value="UniProtKB-KW"/>
</dbReference>
<dbReference type="InterPro" id="IPR003360">
    <property type="entry name" value="US22-like"/>
</dbReference>
<dbReference type="Pfam" id="PF02393">
    <property type="entry name" value="US22"/>
    <property type="match status" value="2"/>
</dbReference>
<evidence type="ECO:0000269" key="1">
    <source>
    </source>
</evidence>
<evidence type="ECO:0000269" key="2">
    <source>
    </source>
</evidence>
<evidence type="ECO:0000305" key="3"/>